<comment type="function">
    <text evidence="1">Binds to 23S rRNA.</text>
</comment>
<comment type="subunit">
    <text evidence="1">Part of the 50S ribosomal subunit.</text>
</comment>
<comment type="subcellular location">
    <subcellularLocation>
        <location>Plastid</location>
        <location>Chloroplast</location>
    </subcellularLocation>
</comment>
<comment type="similarity">
    <text evidence="2">Belongs to the universal ribosomal protein uL23 family.</text>
</comment>
<reference key="1">
    <citation type="journal article" date="2006" name="BMC Evol. Biol.">
        <title>Complete plastid genome sequences of Drimys, Liriodendron, and Piper: implications for the phylogenetic relationships of magnoliids.</title>
        <authorList>
            <person name="Cai Z."/>
            <person name="Penaflor C."/>
            <person name="Kuehl J.V."/>
            <person name="Leebens-Mack J."/>
            <person name="Carlson J.E."/>
            <person name="dePamphilis C.W."/>
            <person name="Boore J.L."/>
            <person name="Jansen R.K."/>
        </authorList>
    </citation>
    <scope>NUCLEOTIDE SEQUENCE [LARGE SCALE GENOMIC DNA]</scope>
</reference>
<protein>
    <recommendedName>
        <fullName evidence="2">Large ribosomal subunit protein uL23cz/uL23cy</fullName>
    </recommendedName>
    <alternativeName>
        <fullName>50S ribosomal protein L23, chloroplastic</fullName>
    </alternativeName>
</protein>
<geneLocation type="chloroplast"/>
<accession>Q06GJ6</accession>
<gene>
    <name type="primary">rpl23-A</name>
</gene>
<gene>
    <name type="primary">rpl23-B</name>
</gene>
<evidence type="ECO:0000250" key="1"/>
<evidence type="ECO:0000305" key="2"/>
<proteinExistence type="inferred from homology"/>
<feature type="chain" id="PRO_0000272922" description="Large ribosomal subunit protein uL23cz/uL23cy">
    <location>
        <begin position="1"/>
        <end position="93"/>
    </location>
</feature>
<sequence length="93" mass="10746">MDGIKYIVFTEKSIRLLGNNQYTSNVESGSTRTEIKHWVELFFGVKVIAMNSHRLQGKGRRMGPIIGHTMHYRRMIITLQPGYSIPPLIEKRT</sequence>
<name>RK23_PIPCE</name>
<keyword id="KW-0150">Chloroplast</keyword>
<keyword id="KW-0934">Plastid</keyword>
<keyword id="KW-0687">Ribonucleoprotein</keyword>
<keyword id="KW-0689">Ribosomal protein</keyword>
<keyword id="KW-0694">RNA-binding</keyword>
<keyword id="KW-0699">rRNA-binding</keyword>
<organism>
    <name type="scientific">Piper cenocladum</name>
    <name type="common">Ant piper</name>
    <dbReference type="NCBI Taxonomy" id="398741"/>
    <lineage>
        <taxon>Eukaryota</taxon>
        <taxon>Viridiplantae</taxon>
        <taxon>Streptophyta</taxon>
        <taxon>Embryophyta</taxon>
        <taxon>Tracheophyta</taxon>
        <taxon>Spermatophyta</taxon>
        <taxon>Magnoliopsida</taxon>
        <taxon>Magnoliidae</taxon>
        <taxon>Piperales</taxon>
        <taxon>Piperaceae</taxon>
        <taxon>Piper</taxon>
    </lineage>
</organism>
<dbReference type="EMBL" id="DQ887677">
    <property type="protein sequence ID" value="ABI14514.1"/>
    <property type="molecule type" value="Genomic_DNA"/>
</dbReference>
<dbReference type="EMBL" id="DQ887677">
    <property type="protein sequence ID" value="ABI14535.1"/>
    <property type="molecule type" value="Genomic_DNA"/>
</dbReference>
<dbReference type="SMR" id="Q06GJ6"/>
<dbReference type="GO" id="GO:0009507">
    <property type="term" value="C:chloroplast"/>
    <property type="evidence" value="ECO:0007669"/>
    <property type="project" value="UniProtKB-SubCell"/>
</dbReference>
<dbReference type="GO" id="GO:1990904">
    <property type="term" value="C:ribonucleoprotein complex"/>
    <property type="evidence" value="ECO:0007669"/>
    <property type="project" value="UniProtKB-KW"/>
</dbReference>
<dbReference type="GO" id="GO:0005840">
    <property type="term" value="C:ribosome"/>
    <property type="evidence" value="ECO:0007669"/>
    <property type="project" value="UniProtKB-KW"/>
</dbReference>
<dbReference type="GO" id="GO:0019843">
    <property type="term" value="F:rRNA binding"/>
    <property type="evidence" value="ECO:0007669"/>
    <property type="project" value="UniProtKB-UniRule"/>
</dbReference>
<dbReference type="GO" id="GO:0003735">
    <property type="term" value="F:structural constituent of ribosome"/>
    <property type="evidence" value="ECO:0007669"/>
    <property type="project" value="InterPro"/>
</dbReference>
<dbReference type="GO" id="GO:0006412">
    <property type="term" value="P:translation"/>
    <property type="evidence" value="ECO:0007669"/>
    <property type="project" value="UniProtKB-UniRule"/>
</dbReference>
<dbReference type="FunFam" id="3.30.70.330:FF:000002">
    <property type="entry name" value="50S ribosomal protein L23, chloroplastic"/>
    <property type="match status" value="1"/>
</dbReference>
<dbReference type="Gene3D" id="3.30.70.330">
    <property type="match status" value="1"/>
</dbReference>
<dbReference type="HAMAP" id="MF_01369_B">
    <property type="entry name" value="Ribosomal_uL23_B"/>
    <property type="match status" value="1"/>
</dbReference>
<dbReference type="InterPro" id="IPR012677">
    <property type="entry name" value="Nucleotide-bd_a/b_plait_sf"/>
</dbReference>
<dbReference type="InterPro" id="IPR013025">
    <property type="entry name" value="Ribosomal_uL23-like"/>
</dbReference>
<dbReference type="InterPro" id="IPR012678">
    <property type="entry name" value="Ribosomal_uL23/eL15/eS24_sf"/>
</dbReference>
<dbReference type="InterPro" id="IPR001014">
    <property type="entry name" value="Ribosomal_uL23_CS"/>
</dbReference>
<dbReference type="PANTHER" id="PTHR11620">
    <property type="entry name" value="60S RIBOSOMAL PROTEIN L23A"/>
    <property type="match status" value="1"/>
</dbReference>
<dbReference type="Pfam" id="PF00276">
    <property type="entry name" value="Ribosomal_L23"/>
    <property type="match status" value="1"/>
</dbReference>
<dbReference type="SUPFAM" id="SSF54189">
    <property type="entry name" value="Ribosomal proteins S24e, L23 and L15e"/>
    <property type="match status" value="1"/>
</dbReference>
<dbReference type="PROSITE" id="PS00050">
    <property type="entry name" value="RIBOSOMAL_L23"/>
    <property type="match status" value="1"/>
</dbReference>